<sequence>MPVSLAVCETTTTTTANVVNAALRESLLGGSRSGAAVAGSGSASSLISGAGGAGASAANDDDSSSTATANTNLQNQIVASAKRVLLAKIEYEEVENYNDSVLDNLKTKYVVIKSPTPAAAAAATNNGNSNSAGSKILGANGHDNRQKQQNANGGCSTPTTTTTQTSSSSTSSSSIEHNNNPNELPKPKRVLYQRENIRIGWKQSERKWQIGAGMINVGNTCYLNSTLQALFHIPALANWLNSEQSHLENCNIGGESGGGGGGGGGNNGGFCIICAMAKTLQSTQSNASAIRPYHIYSKLKQICKHMVIGRQEDAHEFLRFLVEAMEKAYLMRYRNYKELDQLVKETTPLNQIFGGYLRSEVRCLSCNHVSITFQHFQDLLLDIRKSDTLDEAFDGYFSRERLEDMGYKCEGCKKKVSATKQFSLQRAPITLCIQLKRFSMIGNKLTKQISFKPRIDLSRFAARSPTAQGQLPLTYRLVSLVTHLGVSQHCGHYTAIGLTESGSYYNFDDSYVRPIAMQSVCSTNSYIMFYELDLNQPLATPANKLNGLRQLSNGHHHHQQQQQQHQQQQQQQPTVVATIASSPMATTRFIGPQLPPGGLNGYAMTTTTTATNNTTNGHSQKTAIQFKPQQNGILTVGSGKFQESGQQKSPLVGTNHKNEAPAVAPNANANANGKSSSNPNTNTTINTNTNNGNSNNNNTNATTANNSNKLNQQQQQYLPMSSSDEEDSDEEKMKRPTTTTPQLPSMPKMDGGGDEKPKTLTLTPTTTPTASTPTVSNPLKRLVPYESASEEEESSSGTPSSSTPTTTTTAAAAAASSPMQATAAATLPPPPTPTNARKRSLPDHHHHHPHHHVMVNGHGKSPKPASMPPATNFNSSSSKQKTDAIDEIFKSLNNFNKKRINNKNQKHNEGDEEEDDEETLEKETNNSSRLVSSSTNTSPTTNGWKQSQIVSSSSSNSKNVSTSAAAAAATTSSSTSTSAPPSPKTPPSPAVINSKTGLWKVTRNLDDDDDEEEEDEDDEEHIAPTPPPVVAKTHKNPFSSQQKPTPSPSTEAAPKRQKLFNGTSSSTPHVGNGYQSEPSTPNGGGSGSGSNGCLNELLKQSHRGYGSSSVLSWNGKQTELDKEPFELVCAKRIAVDHGDHDDGGGGDDGGGVGVVTTTTTTTTTTKNTTKTLTADAQEQRQRDLDDDEENEMDRGRQRKVKTATANGKSSGNSNNTTPGYNPFQEYESQKRWHNKSSNGPPRFYTQHASSSYRSNFHQRNKFKCNRGGNGGGGSGGISKFDHRHGLQRHLAAGGGFPRRPNANQQQQQQQS</sequence>
<accession>B4MLR8</accession>
<dbReference type="EC" id="3.4.19.12"/>
<dbReference type="EMBL" id="CH963847">
    <property type="protein sequence ID" value="EDW72994.1"/>
    <property type="molecule type" value="Genomic_DNA"/>
</dbReference>
<dbReference type="RefSeq" id="XP_002062008.2">
    <property type="nucleotide sequence ID" value="XM_002061972.2"/>
</dbReference>
<dbReference type="SMR" id="B4MLR8"/>
<dbReference type="STRING" id="7260.B4MLR8"/>
<dbReference type="eggNOG" id="KOG1865">
    <property type="taxonomic scope" value="Eukaryota"/>
</dbReference>
<dbReference type="HOGENOM" id="CLU_006208_0_0_1"/>
<dbReference type="OMA" id="VCAMAKT"/>
<dbReference type="OrthoDB" id="420187at2759"/>
<dbReference type="PhylomeDB" id="B4MLR8"/>
<dbReference type="ChiTaRS" id="scny">
    <property type="organism name" value="fly"/>
</dbReference>
<dbReference type="Proteomes" id="UP000007798">
    <property type="component" value="Unassembled WGS sequence"/>
</dbReference>
<dbReference type="GO" id="GO:0005829">
    <property type="term" value="C:cytosol"/>
    <property type="evidence" value="ECO:0007669"/>
    <property type="project" value="TreeGrafter"/>
</dbReference>
<dbReference type="GO" id="GO:0005730">
    <property type="term" value="C:nucleolus"/>
    <property type="evidence" value="ECO:0000250"/>
    <property type="project" value="UniProtKB"/>
</dbReference>
<dbReference type="GO" id="GO:0004843">
    <property type="term" value="F:cysteine-type deubiquitinase activity"/>
    <property type="evidence" value="ECO:0000250"/>
    <property type="project" value="UniProtKB"/>
</dbReference>
<dbReference type="GO" id="GO:0030718">
    <property type="term" value="P:germ-line stem cell population maintenance"/>
    <property type="evidence" value="ECO:0000250"/>
    <property type="project" value="UniProtKB"/>
</dbReference>
<dbReference type="GO" id="GO:0016242">
    <property type="term" value="P:negative regulation of macroautophagy"/>
    <property type="evidence" value="ECO:0000250"/>
    <property type="project" value="UniProtKB"/>
</dbReference>
<dbReference type="GO" id="GO:0016579">
    <property type="term" value="P:protein deubiquitination"/>
    <property type="evidence" value="ECO:0000250"/>
    <property type="project" value="UniProtKB"/>
</dbReference>
<dbReference type="GO" id="GO:0006508">
    <property type="term" value="P:proteolysis"/>
    <property type="evidence" value="ECO:0007669"/>
    <property type="project" value="UniProtKB-KW"/>
</dbReference>
<dbReference type="GO" id="GO:0042981">
    <property type="term" value="P:regulation of apoptotic process"/>
    <property type="evidence" value="ECO:0007669"/>
    <property type="project" value="TreeGrafter"/>
</dbReference>
<dbReference type="GO" id="GO:0035019">
    <property type="term" value="P:somatic stem cell population maintenance"/>
    <property type="evidence" value="ECO:0000250"/>
    <property type="project" value="UniProtKB"/>
</dbReference>
<dbReference type="CDD" id="cd02661">
    <property type="entry name" value="Peptidase_C19E"/>
    <property type="match status" value="1"/>
</dbReference>
<dbReference type="FunFam" id="3.90.70.10:FF:000085">
    <property type="entry name" value="Ubiquitin carboxyl-terminal hydrolase 36"/>
    <property type="match status" value="1"/>
</dbReference>
<dbReference type="Gene3D" id="3.90.70.10">
    <property type="entry name" value="Cysteine proteinases"/>
    <property type="match status" value="1"/>
</dbReference>
<dbReference type="InterPro" id="IPR038765">
    <property type="entry name" value="Papain-like_cys_pep_sf"/>
</dbReference>
<dbReference type="InterPro" id="IPR050164">
    <property type="entry name" value="Peptidase_C19"/>
</dbReference>
<dbReference type="InterPro" id="IPR001394">
    <property type="entry name" value="Peptidase_C19_UCH"/>
</dbReference>
<dbReference type="InterPro" id="IPR018200">
    <property type="entry name" value="USP_CS"/>
</dbReference>
<dbReference type="InterPro" id="IPR028889">
    <property type="entry name" value="USP_dom"/>
</dbReference>
<dbReference type="PANTHER" id="PTHR24006">
    <property type="entry name" value="UBIQUITIN CARBOXYL-TERMINAL HYDROLASE"/>
    <property type="match status" value="1"/>
</dbReference>
<dbReference type="PANTHER" id="PTHR24006:SF758">
    <property type="entry name" value="UBIQUITIN CARBOXYL-TERMINAL HYDROLASE 36"/>
    <property type="match status" value="1"/>
</dbReference>
<dbReference type="Pfam" id="PF00443">
    <property type="entry name" value="UCH"/>
    <property type="match status" value="1"/>
</dbReference>
<dbReference type="SUPFAM" id="SSF54001">
    <property type="entry name" value="Cysteine proteinases"/>
    <property type="match status" value="1"/>
</dbReference>
<dbReference type="PROSITE" id="PS00972">
    <property type="entry name" value="USP_1"/>
    <property type="match status" value="1"/>
</dbReference>
<dbReference type="PROSITE" id="PS00973">
    <property type="entry name" value="USP_2"/>
    <property type="match status" value="1"/>
</dbReference>
<dbReference type="PROSITE" id="PS50235">
    <property type="entry name" value="USP_3"/>
    <property type="match status" value="1"/>
</dbReference>
<reference key="1">
    <citation type="journal article" date="2007" name="Nature">
        <title>Evolution of genes and genomes on the Drosophila phylogeny.</title>
        <authorList>
            <consortium name="Drosophila 12 genomes consortium"/>
        </authorList>
    </citation>
    <scope>NUCLEOTIDE SEQUENCE [LARGE SCALE GENOMIC DNA]</scope>
    <source>
        <strain>Tucson 14030-0811.24</strain>
    </source>
</reference>
<proteinExistence type="inferred from homology"/>
<comment type="function">
    <text evidence="2">Required for maintaining multiple types of adult stem cells, including male and female germline, epithelial follicle cell and intestinal stem cells. May function as a transcriptional repressor by continually deubiquiting histone H2B at the promoters of genes critical for cellular differentiation, thereby preventing histone H3 'Lys-4' trimethylation (H3K4). Controls selective autophagy activation by ubiquitinated proteins.</text>
</comment>
<comment type="catalytic activity">
    <reaction>
        <text>Thiol-dependent hydrolysis of ester, thioester, amide, peptide and isopeptide bonds formed by the C-terminal Gly of ubiquitin (a 76-residue protein attached to proteins as an intracellular targeting signal).</text>
        <dbReference type="EC" id="3.4.19.12"/>
    </reaction>
</comment>
<comment type="subunit">
    <text evidence="1">Interacts with atms/PAF1, but not with CycT.</text>
</comment>
<comment type="subcellular location">
    <subcellularLocation>
        <location evidence="1">Nucleus</location>
        <location evidence="1">Nucleolus</location>
    </subcellularLocation>
</comment>
<comment type="similarity">
    <text evidence="6">Belongs to the peptidase C19 family.</text>
</comment>
<protein>
    <recommendedName>
        <fullName>Ubiquitin carboxyl-terminal hydrolase 36</fullName>
        <ecNumber>3.4.19.12</ecNumber>
    </recommendedName>
    <alternativeName>
        <fullName>Deubiquitinating enzyme 36</fullName>
    </alternativeName>
    <alternativeName>
        <fullName>Protein scrawny</fullName>
    </alternativeName>
    <alternativeName>
        <fullName>Ubiquitin thioesterase 36</fullName>
    </alternativeName>
    <alternativeName>
        <fullName>Ubiquitin-specific-processing protease 36</fullName>
    </alternativeName>
</protein>
<evidence type="ECO:0000250" key="1"/>
<evidence type="ECO:0000250" key="2">
    <source>
        <dbReference type="UniProtKB" id="Q9VRP5"/>
    </source>
</evidence>
<evidence type="ECO:0000255" key="3">
    <source>
        <dbReference type="PROSITE-ProRule" id="PRU10092"/>
    </source>
</evidence>
<evidence type="ECO:0000255" key="4">
    <source>
        <dbReference type="PROSITE-ProRule" id="PRU10093"/>
    </source>
</evidence>
<evidence type="ECO:0000256" key="5">
    <source>
        <dbReference type="SAM" id="MobiDB-lite"/>
    </source>
</evidence>
<evidence type="ECO:0000305" key="6"/>
<organism>
    <name type="scientific">Drosophila willistoni</name>
    <name type="common">Fruit fly</name>
    <dbReference type="NCBI Taxonomy" id="7260"/>
    <lineage>
        <taxon>Eukaryota</taxon>
        <taxon>Metazoa</taxon>
        <taxon>Ecdysozoa</taxon>
        <taxon>Arthropoda</taxon>
        <taxon>Hexapoda</taxon>
        <taxon>Insecta</taxon>
        <taxon>Pterygota</taxon>
        <taxon>Neoptera</taxon>
        <taxon>Endopterygota</taxon>
        <taxon>Diptera</taxon>
        <taxon>Brachycera</taxon>
        <taxon>Muscomorpha</taxon>
        <taxon>Ephydroidea</taxon>
        <taxon>Drosophilidae</taxon>
        <taxon>Drosophila</taxon>
        <taxon>Sophophora</taxon>
    </lineage>
</organism>
<gene>
    <name type="primary">Usp36</name>
    <name type="synonym">scny</name>
    <name type="ORF">GK17299</name>
</gene>
<keyword id="KW-0378">Hydrolase</keyword>
<keyword id="KW-0539">Nucleus</keyword>
<keyword id="KW-0597">Phosphoprotein</keyword>
<keyword id="KW-0645">Protease</keyword>
<keyword id="KW-1185">Reference proteome</keyword>
<keyword id="KW-0788">Thiol protease</keyword>
<keyword id="KW-0833">Ubl conjugation pathway</keyword>
<feature type="chain" id="PRO_0000378504" description="Ubiquitin carboxyl-terminal hydrolase 36">
    <location>
        <begin position="1"/>
        <end position="1311"/>
    </location>
</feature>
<feature type="domain" description="USP">
    <location>
        <begin position="212"/>
        <end position="533"/>
    </location>
</feature>
<feature type="region of interest" description="Disordered" evidence="5">
    <location>
        <begin position="120"/>
        <end position="189"/>
    </location>
</feature>
<feature type="region of interest" description="Disordered" evidence="5">
    <location>
        <begin position="546"/>
        <end position="575"/>
    </location>
</feature>
<feature type="region of interest" description="Disordered" evidence="5">
    <location>
        <begin position="587"/>
        <end position="620"/>
    </location>
</feature>
<feature type="region of interest" description="Disordered" evidence="5">
    <location>
        <begin position="640"/>
        <end position="1095"/>
    </location>
</feature>
<feature type="region of interest" description="Disordered" evidence="5">
    <location>
        <begin position="1136"/>
        <end position="1311"/>
    </location>
</feature>
<feature type="compositionally biased region" description="Low complexity" evidence="5">
    <location>
        <begin position="120"/>
        <end position="134"/>
    </location>
</feature>
<feature type="compositionally biased region" description="Low complexity" evidence="5">
    <location>
        <begin position="156"/>
        <end position="174"/>
    </location>
</feature>
<feature type="compositionally biased region" description="Low complexity" evidence="5">
    <location>
        <begin position="560"/>
        <end position="572"/>
    </location>
</feature>
<feature type="compositionally biased region" description="Low complexity" evidence="5">
    <location>
        <begin position="605"/>
        <end position="616"/>
    </location>
</feature>
<feature type="compositionally biased region" description="Low complexity" evidence="5">
    <location>
        <begin position="660"/>
        <end position="716"/>
    </location>
</feature>
<feature type="compositionally biased region" description="Low complexity" evidence="5">
    <location>
        <begin position="759"/>
        <end position="774"/>
    </location>
</feature>
<feature type="compositionally biased region" description="Low complexity" evidence="5">
    <location>
        <begin position="795"/>
        <end position="826"/>
    </location>
</feature>
<feature type="compositionally biased region" description="Basic residues" evidence="5">
    <location>
        <begin position="836"/>
        <end position="853"/>
    </location>
</feature>
<feature type="compositionally biased region" description="Polar residues" evidence="5">
    <location>
        <begin position="869"/>
        <end position="879"/>
    </location>
</feature>
<feature type="compositionally biased region" description="Basic and acidic residues" evidence="5">
    <location>
        <begin position="880"/>
        <end position="889"/>
    </location>
</feature>
<feature type="compositionally biased region" description="Basic residues" evidence="5">
    <location>
        <begin position="896"/>
        <end position="905"/>
    </location>
</feature>
<feature type="compositionally biased region" description="Acidic residues" evidence="5">
    <location>
        <begin position="910"/>
        <end position="920"/>
    </location>
</feature>
<feature type="compositionally biased region" description="Low complexity" evidence="5">
    <location>
        <begin position="925"/>
        <end position="942"/>
    </location>
</feature>
<feature type="compositionally biased region" description="Low complexity" evidence="5">
    <location>
        <begin position="950"/>
        <end position="979"/>
    </location>
</feature>
<feature type="compositionally biased region" description="Pro residues" evidence="5">
    <location>
        <begin position="980"/>
        <end position="989"/>
    </location>
</feature>
<feature type="compositionally biased region" description="Acidic residues" evidence="5">
    <location>
        <begin position="1006"/>
        <end position="1020"/>
    </location>
</feature>
<feature type="compositionally biased region" description="Low complexity" evidence="5">
    <location>
        <begin position="1037"/>
        <end position="1050"/>
    </location>
</feature>
<feature type="compositionally biased region" description="Polar residues" evidence="5">
    <location>
        <begin position="1060"/>
        <end position="1081"/>
    </location>
</feature>
<feature type="compositionally biased region" description="Low complexity" evidence="5">
    <location>
        <begin position="1154"/>
        <end position="1176"/>
    </location>
</feature>
<feature type="compositionally biased region" description="Low complexity" evidence="5">
    <location>
        <begin position="1204"/>
        <end position="1221"/>
    </location>
</feature>
<feature type="compositionally biased region" description="Polar residues" evidence="5">
    <location>
        <begin position="1246"/>
        <end position="1255"/>
    </location>
</feature>
<feature type="compositionally biased region" description="Gly residues" evidence="5">
    <location>
        <begin position="1267"/>
        <end position="1276"/>
    </location>
</feature>
<feature type="active site" description="Nucleophile" evidence="3 4">
    <location>
        <position position="221"/>
    </location>
</feature>
<feature type="active site" description="Proton acceptor" evidence="3 4">
    <location>
        <position position="492"/>
    </location>
</feature>
<feature type="modified residue" description="Phosphoserine" evidence="1">
    <location>
        <position position="581"/>
    </location>
</feature>
<feature type="modified residue" description="Phosphothreonine" evidence="1">
    <location>
        <position position="767"/>
    </location>
</feature>
<feature type="modified residue" description="Phosphoserine" evidence="1">
    <location>
        <position position="787"/>
    </location>
</feature>
<feature type="modified residue" description="Phosphoserine" evidence="1">
    <location>
        <position position="789"/>
    </location>
</feature>
<feature type="modified residue" description="Phosphoserine" evidence="1">
    <location>
        <position position="982"/>
    </location>
</feature>
<feature type="modified residue" description="Phosphothreonine" evidence="1">
    <location>
        <position position="985"/>
    </location>
</feature>
<feature type="modified residue" description="Phosphoserine" evidence="1">
    <location>
        <position position="988"/>
    </location>
</feature>
<feature type="modified residue" description="Phosphoserine" evidence="1">
    <location>
        <position position="1047"/>
    </location>
</feature>
<feature type="modified residue" description="Phosphothreonine" evidence="1">
    <location>
        <position position="1050"/>
    </location>
</feature>
<name>UBP36_DROWI</name>